<reference key="1">
    <citation type="journal article" date="2002" name="Nature">
        <title>The genome sequence of Schizosaccharomyces pombe.</title>
        <authorList>
            <person name="Wood V."/>
            <person name="Gwilliam R."/>
            <person name="Rajandream M.A."/>
            <person name="Lyne M.H."/>
            <person name="Lyne R."/>
            <person name="Stewart A."/>
            <person name="Sgouros J.G."/>
            <person name="Peat N."/>
            <person name="Hayles J."/>
            <person name="Baker S.G."/>
            <person name="Basham D."/>
            <person name="Bowman S."/>
            <person name="Brooks K."/>
            <person name="Brown D."/>
            <person name="Brown S."/>
            <person name="Chillingworth T."/>
            <person name="Churcher C.M."/>
            <person name="Collins M."/>
            <person name="Connor R."/>
            <person name="Cronin A."/>
            <person name="Davis P."/>
            <person name="Feltwell T."/>
            <person name="Fraser A."/>
            <person name="Gentles S."/>
            <person name="Goble A."/>
            <person name="Hamlin N."/>
            <person name="Harris D.E."/>
            <person name="Hidalgo J."/>
            <person name="Hodgson G."/>
            <person name="Holroyd S."/>
            <person name="Hornsby T."/>
            <person name="Howarth S."/>
            <person name="Huckle E.J."/>
            <person name="Hunt S."/>
            <person name="Jagels K."/>
            <person name="James K.D."/>
            <person name="Jones L."/>
            <person name="Jones M."/>
            <person name="Leather S."/>
            <person name="McDonald S."/>
            <person name="McLean J."/>
            <person name="Mooney P."/>
            <person name="Moule S."/>
            <person name="Mungall K.L."/>
            <person name="Murphy L.D."/>
            <person name="Niblett D."/>
            <person name="Odell C."/>
            <person name="Oliver K."/>
            <person name="O'Neil S."/>
            <person name="Pearson D."/>
            <person name="Quail M.A."/>
            <person name="Rabbinowitsch E."/>
            <person name="Rutherford K.M."/>
            <person name="Rutter S."/>
            <person name="Saunders D."/>
            <person name="Seeger K."/>
            <person name="Sharp S."/>
            <person name="Skelton J."/>
            <person name="Simmonds M.N."/>
            <person name="Squares R."/>
            <person name="Squares S."/>
            <person name="Stevens K."/>
            <person name="Taylor K."/>
            <person name="Taylor R.G."/>
            <person name="Tivey A."/>
            <person name="Walsh S.V."/>
            <person name="Warren T."/>
            <person name="Whitehead S."/>
            <person name="Woodward J.R."/>
            <person name="Volckaert G."/>
            <person name="Aert R."/>
            <person name="Robben J."/>
            <person name="Grymonprez B."/>
            <person name="Weltjens I."/>
            <person name="Vanstreels E."/>
            <person name="Rieger M."/>
            <person name="Schaefer M."/>
            <person name="Mueller-Auer S."/>
            <person name="Gabel C."/>
            <person name="Fuchs M."/>
            <person name="Duesterhoeft A."/>
            <person name="Fritzc C."/>
            <person name="Holzer E."/>
            <person name="Moestl D."/>
            <person name="Hilbert H."/>
            <person name="Borzym K."/>
            <person name="Langer I."/>
            <person name="Beck A."/>
            <person name="Lehrach H."/>
            <person name="Reinhardt R."/>
            <person name="Pohl T.M."/>
            <person name="Eger P."/>
            <person name="Zimmermann W."/>
            <person name="Wedler H."/>
            <person name="Wambutt R."/>
            <person name="Purnelle B."/>
            <person name="Goffeau A."/>
            <person name="Cadieu E."/>
            <person name="Dreano S."/>
            <person name="Gloux S."/>
            <person name="Lelaure V."/>
            <person name="Mottier S."/>
            <person name="Galibert F."/>
            <person name="Aves S.J."/>
            <person name="Xiang Z."/>
            <person name="Hunt C."/>
            <person name="Moore K."/>
            <person name="Hurst S.M."/>
            <person name="Lucas M."/>
            <person name="Rochet M."/>
            <person name="Gaillardin C."/>
            <person name="Tallada V.A."/>
            <person name="Garzon A."/>
            <person name="Thode G."/>
            <person name="Daga R.R."/>
            <person name="Cruzado L."/>
            <person name="Jimenez J."/>
            <person name="Sanchez M."/>
            <person name="del Rey F."/>
            <person name="Benito J."/>
            <person name="Dominguez A."/>
            <person name="Revuelta J.L."/>
            <person name="Moreno S."/>
            <person name="Armstrong J."/>
            <person name="Forsburg S.L."/>
            <person name="Cerutti L."/>
            <person name="Lowe T."/>
            <person name="McCombie W.R."/>
            <person name="Paulsen I."/>
            <person name="Potashkin J."/>
            <person name="Shpakovski G.V."/>
            <person name="Ussery D."/>
            <person name="Barrell B.G."/>
            <person name="Nurse P."/>
        </authorList>
    </citation>
    <scope>NUCLEOTIDE SEQUENCE [LARGE SCALE GENOMIC DNA]</scope>
    <source>
        <strain>972 / ATCC 24843</strain>
    </source>
</reference>
<proteinExistence type="inferred from homology"/>
<accession>Q09857</accession>
<accession>Q9P7V0</accession>
<feature type="chain" id="PRO_0000116421" description="Intracellular protein transport protein uso1">
    <location>
        <begin position="1"/>
        <end position="1067"/>
    </location>
</feature>
<feature type="repeat" description="ARM 1">
    <location>
        <begin position="51"/>
        <end position="92"/>
    </location>
</feature>
<feature type="repeat" description="ARM 2">
    <location>
        <begin position="105"/>
        <end position="144"/>
    </location>
</feature>
<feature type="repeat" description="ARM 3">
    <location>
        <begin position="148"/>
        <end position="188"/>
    </location>
</feature>
<feature type="repeat" description="ARM 4">
    <location>
        <begin position="191"/>
        <end position="234"/>
    </location>
</feature>
<feature type="repeat" description="ARM 5">
    <location>
        <begin position="237"/>
        <end position="285"/>
    </location>
</feature>
<feature type="repeat" description="ARM 6">
    <location>
        <begin position="287"/>
        <end position="313"/>
    </location>
</feature>
<feature type="repeat" description="ARM 7">
    <location>
        <begin position="343"/>
        <end position="366"/>
    </location>
</feature>
<feature type="repeat" description="ARM 8">
    <location>
        <begin position="367"/>
        <end position="405"/>
    </location>
</feature>
<feature type="repeat" description="ARM 9">
    <location>
        <begin position="407"/>
        <end position="446"/>
    </location>
</feature>
<feature type="repeat" description="ARM 10">
    <location>
        <begin position="484"/>
        <end position="513"/>
    </location>
</feature>
<feature type="repeat" description="ARM 11">
    <location>
        <begin position="514"/>
        <end position="555"/>
    </location>
</feature>
<feature type="repeat" description="ARM 12">
    <location>
        <begin position="648"/>
        <end position="688"/>
    </location>
</feature>
<feature type="repeat" description="ARM 13">
    <location>
        <begin position="770"/>
        <end position="810"/>
    </location>
</feature>
<feature type="repeat" description="ARM 14">
    <location>
        <begin position="830"/>
        <end position="873"/>
    </location>
</feature>
<feature type="repeat" description="ARM 15">
    <location>
        <begin position="958"/>
        <end position="997"/>
    </location>
</feature>
<feature type="region of interest" description="Disordered" evidence="3">
    <location>
        <begin position="934"/>
        <end position="962"/>
    </location>
</feature>
<feature type="coiled-coil region" evidence="2">
    <location>
        <begin position="623"/>
        <end position="1034"/>
    </location>
</feature>
<feature type="compositionally biased region" description="Basic and acidic residues" evidence="3">
    <location>
        <begin position="934"/>
        <end position="943"/>
    </location>
</feature>
<feature type="compositionally biased region" description="Basic and acidic residues" evidence="3">
    <location>
        <begin position="951"/>
        <end position="962"/>
    </location>
</feature>
<comment type="function">
    <text>Required for protein transport from the ER to the Golgi complex.</text>
</comment>
<comment type="subcellular location">
    <subcellularLocation>
        <location evidence="1">Cytoplasm</location>
        <location evidence="1">Cytoskeleton</location>
    </subcellularLocation>
    <subcellularLocation>
        <location evidence="1">Cytoplasmic vesicle membrane</location>
        <topology evidence="1">Peripheral membrane protein</topology>
    </subcellularLocation>
    <subcellularLocation>
        <location evidence="1">Endoplasmic reticulum membrane</location>
        <topology evidence="1">Peripheral membrane protein</topology>
    </subcellularLocation>
    <subcellularLocation>
        <location evidence="1">Golgi apparatus membrane</location>
        <topology evidence="1">Peripheral membrane protein</topology>
    </subcellularLocation>
</comment>
<comment type="similarity">
    <text evidence="4">Belongs to the VDP/USO1/EDE1 family.</text>
</comment>
<comment type="sequence caution" evidence="4">
    <conflict type="erroneous gene model prediction">
        <sequence resource="EMBL-CDS" id="CAA91425"/>
    </conflict>
</comment>
<organism>
    <name type="scientific">Schizosaccharomyces pombe (strain 972 / ATCC 24843)</name>
    <name type="common">Fission yeast</name>
    <dbReference type="NCBI Taxonomy" id="284812"/>
    <lineage>
        <taxon>Eukaryota</taxon>
        <taxon>Fungi</taxon>
        <taxon>Dikarya</taxon>
        <taxon>Ascomycota</taxon>
        <taxon>Taphrinomycotina</taxon>
        <taxon>Schizosaccharomycetes</taxon>
        <taxon>Schizosaccharomycetales</taxon>
        <taxon>Schizosaccharomycetaceae</taxon>
        <taxon>Schizosaccharomyces</taxon>
    </lineage>
</organism>
<name>USO1_SCHPO</name>
<protein>
    <recommendedName>
        <fullName>Intracellular protein transport protein uso1</fullName>
    </recommendedName>
</protein>
<keyword id="KW-0175">Coiled coil</keyword>
<keyword id="KW-0963">Cytoplasm</keyword>
<keyword id="KW-0968">Cytoplasmic vesicle</keyword>
<keyword id="KW-0206">Cytoskeleton</keyword>
<keyword id="KW-0256">Endoplasmic reticulum</keyword>
<keyword id="KW-0333">Golgi apparatus</keyword>
<keyword id="KW-0472">Membrane</keyword>
<keyword id="KW-0653">Protein transport</keyword>
<keyword id="KW-1185">Reference proteome</keyword>
<keyword id="KW-0677">Repeat</keyword>
<keyword id="KW-0813">Transport</keyword>
<evidence type="ECO:0000250" key="1"/>
<evidence type="ECO:0000255" key="2"/>
<evidence type="ECO:0000256" key="3">
    <source>
        <dbReference type="SAM" id="MobiDB-lite"/>
    </source>
</evidence>
<evidence type="ECO:0000305" key="4"/>
<gene>
    <name type="primary">uso1</name>
    <name type="ORF">SPAC29E6.03c</name>
    <name type="ORF">SPAC30.07c</name>
</gene>
<dbReference type="EMBL" id="Z66525">
    <property type="protein sequence ID" value="CAA91425.1"/>
    <property type="status" value="ALT_SEQ"/>
    <property type="molecule type" value="Genomic_DNA"/>
</dbReference>
<dbReference type="EMBL" id="CU329670">
    <property type="protein sequence ID" value="CAB66466.2"/>
    <property type="molecule type" value="Genomic_DNA"/>
</dbReference>
<dbReference type="PIR" id="S62509">
    <property type="entry name" value="S62509"/>
</dbReference>
<dbReference type="PIR" id="T50213">
    <property type="entry name" value="T50213"/>
</dbReference>
<dbReference type="RefSeq" id="NP_594561.2">
    <property type="nucleotide sequence ID" value="NM_001019990.2"/>
</dbReference>
<dbReference type="SMR" id="Q09857"/>
<dbReference type="FunCoup" id="Q09857">
    <property type="interactions" value="483"/>
</dbReference>
<dbReference type="STRING" id="284812.Q09857"/>
<dbReference type="iPTMnet" id="Q09857"/>
<dbReference type="SwissPalm" id="Q09857"/>
<dbReference type="PaxDb" id="4896-SPAC29E6.03c.1"/>
<dbReference type="EnsemblFungi" id="SPAC29E6.03c.1">
    <property type="protein sequence ID" value="SPAC29E6.03c.1:pep"/>
    <property type="gene ID" value="SPAC29E6.03c"/>
</dbReference>
<dbReference type="PomBase" id="SPAC29E6.03c">
    <property type="gene designation" value="uso1"/>
</dbReference>
<dbReference type="VEuPathDB" id="FungiDB:SPAC29E6.03c"/>
<dbReference type="eggNOG" id="KOG0946">
    <property type="taxonomic scope" value="Eukaryota"/>
</dbReference>
<dbReference type="HOGENOM" id="CLU_006318_4_0_1"/>
<dbReference type="InParanoid" id="Q09857"/>
<dbReference type="OMA" id="WLWEDPK"/>
<dbReference type="PhylomeDB" id="Q09857"/>
<dbReference type="Reactome" id="R-SPO-204005">
    <property type="pathway name" value="COPII-mediated vesicle transport"/>
</dbReference>
<dbReference type="Reactome" id="R-SPO-6807878">
    <property type="pathway name" value="COPI-mediated anterograde transport"/>
</dbReference>
<dbReference type="PRO" id="PR:Q09857"/>
<dbReference type="Proteomes" id="UP000002485">
    <property type="component" value="Chromosome I"/>
</dbReference>
<dbReference type="GO" id="GO:0005856">
    <property type="term" value="C:cytoskeleton"/>
    <property type="evidence" value="ECO:0007669"/>
    <property type="project" value="UniProtKB-SubCell"/>
</dbReference>
<dbReference type="GO" id="GO:0005783">
    <property type="term" value="C:endoplasmic reticulum"/>
    <property type="evidence" value="ECO:0000318"/>
    <property type="project" value="GO_Central"/>
</dbReference>
<dbReference type="GO" id="GO:0005789">
    <property type="term" value="C:endoplasmic reticulum membrane"/>
    <property type="evidence" value="ECO:0007669"/>
    <property type="project" value="UniProtKB-SubCell"/>
</dbReference>
<dbReference type="GO" id="GO:0012507">
    <property type="term" value="C:ER to Golgi transport vesicle membrane"/>
    <property type="evidence" value="ECO:0000318"/>
    <property type="project" value="GO_Central"/>
</dbReference>
<dbReference type="GO" id="GO:0000139">
    <property type="term" value="C:Golgi membrane"/>
    <property type="evidence" value="ECO:0007669"/>
    <property type="project" value="UniProtKB-SubCell"/>
</dbReference>
<dbReference type="GO" id="GO:0005795">
    <property type="term" value="C:Golgi stack"/>
    <property type="evidence" value="ECO:0000318"/>
    <property type="project" value="GO_Central"/>
</dbReference>
<dbReference type="GO" id="GO:0006888">
    <property type="term" value="P:endoplasmic reticulum to Golgi vesicle-mediated transport"/>
    <property type="evidence" value="ECO:0000318"/>
    <property type="project" value="GO_Central"/>
</dbReference>
<dbReference type="GO" id="GO:0048211">
    <property type="term" value="P:Golgi vesicle docking"/>
    <property type="evidence" value="ECO:0000318"/>
    <property type="project" value="GO_Central"/>
</dbReference>
<dbReference type="GO" id="GO:0006886">
    <property type="term" value="P:intracellular protein transport"/>
    <property type="evidence" value="ECO:0000318"/>
    <property type="project" value="GO_Central"/>
</dbReference>
<dbReference type="GO" id="GO:0061025">
    <property type="term" value="P:membrane fusion"/>
    <property type="evidence" value="ECO:0000318"/>
    <property type="project" value="GO_Central"/>
</dbReference>
<dbReference type="GO" id="GO:0048280">
    <property type="term" value="P:vesicle fusion with Golgi apparatus"/>
    <property type="evidence" value="ECO:0007669"/>
    <property type="project" value="InterPro"/>
</dbReference>
<dbReference type="Gene3D" id="1.10.287.1490">
    <property type="match status" value="1"/>
</dbReference>
<dbReference type="Gene3D" id="1.25.10.10">
    <property type="entry name" value="Leucine-rich Repeat Variant"/>
    <property type="match status" value="1"/>
</dbReference>
<dbReference type="InterPro" id="IPR011989">
    <property type="entry name" value="ARM-like"/>
</dbReference>
<dbReference type="InterPro" id="IPR016024">
    <property type="entry name" value="ARM-type_fold"/>
</dbReference>
<dbReference type="InterPro" id="IPR024095">
    <property type="entry name" value="Vesicle_P115"/>
</dbReference>
<dbReference type="InterPro" id="IPR006953">
    <property type="entry name" value="Vesicle_Uso1_P115_head"/>
</dbReference>
<dbReference type="PANTHER" id="PTHR10013">
    <property type="entry name" value="GENERAL VESICULAR TRANSPORT FACTOR P115"/>
    <property type="match status" value="1"/>
</dbReference>
<dbReference type="PANTHER" id="PTHR10013:SF0">
    <property type="entry name" value="GENERAL VESICULAR TRANSPORT FACTOR P115"/>
    <property type="match status" value="1"/>
</dbReference>
<dbReference type="Pfam" id="PF04869">
    <property type="entry name" value="Uso1_p115_head"/>
    <property type="match status" value="1"/>
</dbReference>
<dbReference type="SUPFAM" id="SSF48371">
    <property type="entry name" value="ARM repeat"/>
    <property type="match status" value="1"/>
</dbReference>
<dbReference type="SUPFAM" id="SSF57997">
    <property type="entry name" value="Tropomyosin"/>
    <property type="match status" value="1"/>
</dbReference>
<sequence length="1067" mass="121576">MDIFHKSYNVILSPPKVQQADETISKLCDRLEHATLFEDRKAAALGIKSFAREFKELVAAHGLKGIIQSLHRDYDDPELLKVTLETCLILTRHDDDSRASDTGLWIADQFILNQDNIQCLLQSISHKDFYVRLYSVELFSAILSCRPTELKDCLQTFPSAISSIMVPLRDSIEPVRNADLYFLSELVKDCTSIQKLVVFENAFETLFSLLENEGGVDGGIIALEALKFLNVLLKDNISNQNYFRESNHIPSLLKLLSVDTFVDGTWDTSRVQCVIEALYALQSLVPIGLSSSIANQNAVVSNHGIDVLLTLATHPDLLFFDVQKISWITLAHVVYSNARAQNSFVDSTFFDIKNTDVLTCLFDYLFLSSISPSHRYSVAFFLRSLTSENDELSSKFLKQIIHAYTHKQDNRLNIIQGYLDLVHLSDQDQYDNWFTSTILTYLVIDNDQRKYLLCSIPLFQDMDNDEDSESEDKVTFIQCVSTKLIATLRHENALQNCVGYLTLLIALVYGNPDSVKDFLSESSILQTFLTALMDESSSANSVIQGMIAVFLSLVYYYCPIESPVSKSDVYNAITSAVKRDVFINRLQRLRRMNLYEITFLSMKQKMHAIDDAADAFNTKIGEINTLDAFDEAQKQLKSLREEIDNTKEALDLSVKERSIQEEKLNESLKTSKTNLEEQTQLAEKYHEELLDNQQKLYDLRIELDYTKSNCKQMEEEMQVLREGHESEIKDFIEEHSKLTKQLDDIKNQFGIISSKNRDLLSELEKSKSLNNSLAALESKNKKLENDLNLLTEKLNKKNADTESFKNTIREAELSKKALNDNLGNKENIISDLKNKLSEESTRLQELQSQLNQDKNQIETLNERISAAADELSSMESINKNQANELKLAKQKCSNLQEKINFGNKLAKEHTEKISSLEKDLEAATKTASTLSKELKTVKSENDSLKSVSNDDQNKEKSVNNEKFKEVSQALAEANEKLNARDEEIERLKVDIIGLQNASLNMQSLKDSDNRTISDLESKNKELEKKLKEADEYWLLIVEELESKRTKDKELLRQCGQAVSEDEQSEEE</sequence>